<protein>
    <recommendedName>
        <fullName evidence="1">Porphobilinogen deaminase</fullName>
        <shortName evidence="1">PBG</shortName>
        <ecNumber evidence="1">2.5.1.61</ecNumber>
    </recommendedName>
    <alternativeName>
        <fullName evidence="1">Hydroxymethylbilane synthase</fullName>
        <shortName evidence="1">HMBS</shortName>
    </alternativeName>
    <alternativeName>
        <fullName evidence="1">Pre-uroporphyrinogen synthase</fullName>
    </alternativeName>
</protein>
<proteinExistence type="inferred from homology"/>
<comment type="function">
    <text evidence="1">Tetrapolymerization of the monopyrrole PBG into the hydroxymethylbilane pre-uroporphyrinogen in several discrete steps.</text>
</comment>
<comment type="catalytic activity">
    <reaction evidence="1">
        <text>4 porphobilinogen + H2O = hydroxymethylbilane + 4 NH4(+)</text>
        <dbReference type="Rhea" id="RHEA:13185"/>
        <dbReference type="ChEBI" id="CHEBI:15377"/>
        <dbReference type="ChEBI" id="CHEBI:28938"/>
        <dbReference type="ChEBI" id="CHEBI:57845"/>
        <dbReference type="ChEBI" id="CHEBI:58126"/>
        <dbReference type="EC" id="2.5.1.61"/>
    </reaction>
</comment>
<comment type="cofactor">
    <cofactor evidence="1">
        <name>dipyrromethane</name>
        <dbReference type="ChEBI" id="CHEBI:60342"/>
    </cofactor>
    <text evidence="1">Binds 1 dipyrromethane group covalently.</text>
</comment>
<comment type="pathway">
    <text evidence="1">Porphyrin-containing compound metabolism; protoporphyrin-IX biosynthesis; coproporphyrinogen-III from 5-aminolevulinate: step 2/4.</text>
</comment>
<comment type="subunit">
    <text evidence="1">Monomer.</text>
</comment>
<comment type="miscellaneous">
    <text evidence="1">The porphobilinogen subunits are added to the dipyrromethane group.</text>
</comment>
<comment type="similarity">
    <text evidence="1">Belongs to the HMBS family.</text>
</comment>
<feature type="chain" id="PRO_0000304247" description="Porphobilinogen deaminase">
    <location>
        <begin position="1"/>
        <end position="309"/>
    </location>
</feature>
<feature type="modified residue" description="S-(dipyrrolylmethanemethyl)cysteine" evidence="1">
    <location>
        <position position="240"/>
    </location>
</feature>
<keyword id="KW-0627">Porphyrin biosynthesis</keyword>
<keyword id="KW-1185">Reference proteome</keyword>
<keyword id="KW-0808">Transferase</keyword>
<dbReference type="EC" id="2.5.1.61" evidence="1"/>
<dbReference type="EMBL" id="AM180252">
    <property type="protein sequence ID" value="CAJ55065.1"/>
    <property type="molecule type" value="Genomic_DNA"/>
</dbReference>
<dbReference type="RefSeq" id="WP_011527094.1">
    <property type="nucleotide sequence ID" value="NC_008011.1"/>
</dbReference>
<dbReference type="SMR" id="Q1MPL2"/>
<dbReference type="STRING" id="363253.LI1011"/>
<dbReference type="KEGG" id="lip:LI1011"/>
<dbReference type="eggNOG" id="COG0181">
    <property type="taxonomic scope" value="Bacteria"/>
</dbReference>
<dbReference type="HOGENOM" id="CLU_019704_0_2_7"/>
<dbReference type="OrthoDB" id="9810298at2"/>
<dbReference type="UniPathway" id="UPA00251">
    <property type="reaction ID" value="UER00319"/>
</dbReference>
<dbReference type="Proteomes" id="UP000002430">
    <property type="component" value="Chromosome"/>
</dbReference>
<dbReference type="GO" id="GO:0005737">
    <property type="term" value="C:cytoplasm"/>
    <property type="evidence" value="ECO:0007669"/>
    <property type="project" value="TreeGrafter"/>
</dbReference>
<dbReference type="GO" id="GO:0004418">
    <property type="term" value="F:hydroxymethylbilane synthase activity"/>
    <property type="evidence" value="ECO:0007669"/>
    <property type="project" value="UniProtKB-UniRule"/>
</dbReference>
<dbReference type="GO" id="GO:0006782">
    <property type="term" value="P:protoporphyrinogen IX biosynthetic process"/>
    <property type="evidence" value="ECO:0007669"/>
    <property type="project" value="UniProtKB-UniRule"/>
</dbReference>
<dbReference type="CDD" id="cd13646">
    <property type="entry name" value="PBP2_EcHMBS_like"/>
    <property type="match status" value="1"/>
</dbReference>
<dbReference type="FunFam" id="3.40.190.10:FF:000004">
    <property type="entry name" value="Porphobilinogen deaminase"/>
    <property type="match status" value="1"/>
</dbReference>
<dbReference type="FunFam" id="3.40.190.10:FF:000005">
    <property type="entry name" value="Porphobilinogen deaminase"/>
    <property type="match status" value="1"/>
</dbReference>
<dbReference type="Gene3D" id="3.40.190.10">
    <property type="entry name" value="Periplasmic binding protein-like II"/>
    <property type="match status" value="2"/>
</dbReference>
<dbReference type="Gene3D" id="3.30.160.40">
    <property type="entry name" value="Porphobilinogen deaminase, C-terminal domain"/>
    <property type="match status" value="1"/>
</dbReference>
<dbReference type="HAMAP" id="MF_00260">
    <property type="entry name" value="Porphobil_deam"/>
    <property type="match status" value="1"/>
</dbReference>
<dbReference type="InterPro" id="IPR000860">
    <property type="entry name" value="HemC"/>
</dbReference>
<dbReference type="InterPro" id="IPR022419">
    <property type="entry name" value="Porphobilin_deaminase_cofac_BS"/>
</dbReference>
<dbReference type="InterPro" id="IPR022417">
    <property type="entry name" value="Porphobilin_deaminase_N"/>
</dbReference>
<dbReference type="InterPro" id="IPR022418">
    <property type="entry name" value="Porphobilinogen_deaminase_C"/>
</dbReference>
<dbReference type="InterPro" id="IPR036803">
    <property type="entry name" value="Porphobilinogen_deaminase_C_sf"/>
</dbReference>
<dbReference type="NCBIfam" id="TIGR00212">
    <property type="entry name" value="hemC"/>
    <property type="match status" value="1"/>
</dbReference>
<dbReference type="PANTHER" id="PTHR11557">
    <property type="entry name" value="PORPHOBILINOGEN DEAMINASE"/>
    <property type="match status" value="1"/>
</dbReference>
<dbReference type="PANTHER" id="PTHR11557:SF0">
    <property type="entry name" value="PORPHOBILINOGEN DEAMINASE"/>
    <property type="match status" value="1"/>
</dbReference>
<dbReference type="Pfam" id="PF01379">
    <property type="entry name" value="Porphobil_deam"/>
    <property type="match status" value="1"/>
</dbReference>
<dbReference type="Pfam" id="PF03900">
    <property type="entry name" value="Porphobil_deamC"/>
    <property type="match status" value="1"/>
</dbReference>
<dbReference type="PIRSF" id="PIRSF001438">
    <property type="entry name" value="4pyrrol_synth_OHMeBilane_synth"/>
    <property type="match status" value="1"/>
</dbReference>
<dbReference type="PRINTS" id="PR00151">
    <property type="entry name" value="PORPHBDMNASE"/>
</dbReference>
<dbReference type="SUPFAM" id="SSF53850">
    <property type="entry name" value="Periplasmic binding protein-like II"/>
    <property type="match status" value="1"/>
</dbReference>
<dbReference type="SUPFAM" id="SSF54782">
    <property type="entry name" value="Porphobilinogen deaminase (hydroxymethylbilane synthase), C-terminal domain"/>
    <property type="match status" value="1"/>
</dbReference>
<dbReference type="PROSITE" id="PS00533">
    <property type="entry name" value="PORPHOBILINOGEN_DEAM"/>
    <property type="match status" value="1"/>
</dbReference>
<gene>
    <name evidence="1" type="primary">hemC</name>
    <name type="ordered locus">LI1011</name>
</gene>
<sequence length="309" mass="33993">MKKITIATRGSKLAFWQANYIKDQLQKMYSYLEVDLMVIKTKGDHILDVPLAKVGGKGLFVKEIEEALLSGEADCAVHSMKDVPMELPFELCLAAITEREDPTDMFLSIKYSGVKSLPENALVGTSSLRRQAQLLALRPDLQIIPLRGNIDTRLRKLMAEEFDAIIMATAGIKRLGLIAPYMSSLPCSVMLPAVGQGALGIEVQKERQDVLELFSFLNHKETYHCIQAERDFLAGLDGGCQVPIAGYATICKQETICLEGLVAKSDGSVMIRNRLERSVSDAYDIGMTLSKILLAEGADDILASMHTIL</sequence>
<evidence type="ECO:0000255" key="1">
    <source>
        <dbReference type="HAMAP-Rule" id="MF_00260"/>
    </source>
</evidence>
<name>HEM3_LAWIP</name>
<reference key="1">
    <citation type="submission" date="2005-11" db="EMBL/GenBank/DDBJ databases">
        <title>The complete genome sequence of Lawsonia intracellularis: the causative agent of proliferative enteropathy.</title>
        <authorList>
            <person name="Kaur K."/>
            <person name="Zhang Q."/>
            <person name="Beckler D."/>
            <person name="Munir S."/>
            <person name="Li L."/>
            <person name="Kinsley K."/>
            <person name="Herron L."/>
            <person name="Peterson A."/>
            <person name="May B."/>
            <person name="Singh S."/>
            <person name="Gebhart C."/>
            <person name="Kapur V."/>
        </authorList>
    </citation>
    <scope>NUCLEOTIDE SEQUENCE [LARGE SCALE GENOMIC DNA]</scope>
    <source>
        <strain>PHE/MN1-00</strain>
    </source>
</reference>
<organism>
    <name type="scientific">Lawsonia intracellularis (strain PHE/MN1-00)</name>
    <dbReference type="NCBI Taxonomy" id="363253"/>
    <lineage>
        <taxon>Bacteria</taxon>
        <taxon>Pseudomonadati</taxon>
        <taxon>Thermodesulfobacteriota</taxon>
        <taxon>Desulfovibrionia</taxon>
        <taxon>Desulfovibrionales</taxon>
        <taxon>Desulfovibrionaceae</taxon>
        <taxon>Lawsonia</taxon>
    </lineage>
</organism>
<accession>Q1MPL2</accession>